<feature type="chain" id="PRO_1000114080" description="Aminomethyltransferase">
    <location>
        <begin position="1"/>
        <end position="372"/>
    </location>
</feature>
<accession>B1YQQ3</accession>
<dbReference type="EC" id="2.1.2.10" evidence="1"/>
<dbReference type="EMBL" id="CP001025">
    <property type="protein sequence ID" value="ACB62647.1"/>
    <property type="molecule type" value="Genomic_DNA"/>
</dbReference>
<dbReference type="RefSeq" id="WP_012362798.1">
    <property type="nucleotide sequence ID" value="NC_010551.1"/>
</dbReference>
<dbReference type="SMR" id="B1YQQ3"/>
<dbReference type="KEGG" id="bac:BamMC406_0145"/>
<dbReference type="HOGENOM" id="CLU_007884_10_2_4"/>
<dbReference type="OrthoDB" id="9774591at2"/>
<dbReference type="Proteomes" id="UP000001680">
    <property type="component" value="Chromosome 1"/>
</dbReference>
<dbReference type="GO" id="GO:0005829">
    <property type="term" value="C:cytosol"/>
    <property type="evidence" value="ECO:0007669"/>
    <property type="project" value="TreeGrafter"/>
</dbReference>
<dbReference type="GO" id="GO:0005960">
    <property type="term" value="C:glycine cleavage complex"/>
    <property type="evidence" value="ECO:0007669"/>
    <property type="project" value="InterPro"/>
</dbReference>
<dbReference type="GO" id="GO:0004047">
    <property type="term" value="F:aminomethyltransferase activity"/>
    <property type="evidence" value="ECO:0007669"/>
    <property type="project" value="UniProtKB-UniRule"/>
</dbReference>
<dbReference type="GO" id="GO:0008483">
    <property type="term" value="F:transaminase activity"/>
    <property type="evidence" value="ECO:0007669"/>
    <property type="project" value="UniProtKB-KW"/>
</dbReference>
<dbReference type="GO" id="GO:0019464">
    <property type="term" value="P:glycine decarboxylation via glycine cleavage system"/>
    <property type="evidence" value="ECO:0007669"/>
    <property type="project" value="UniProtKB-UniRule"/>
</dbReference>
<dbReference type="FunFam" id="3.30.70.1400:FF:000001">
    <property type="entry name" value="Aminomethyltransferase"/>
    <property type="match status" value="1"/>
</dbReference>
<dbReference type="FunFam" id="4.10.1250.10:FF:000001">
    <property type="entry name" value="Aminomethyltransferase"/>
    <property type="match status" value="1"/>
</dbReference>
<dbReference type="Gene3D" id="2.40.30.110">
    <property type="entry name" value="Aminomethyltransferase beta-barrel domains"/>
    <property type="match status" value="1"/>
</dbReference>
<dbReference type="Gene3D" id="3.30.70.1400">
    <property type="entry name" value="Aminomethyltransferase beta-barrel domains"/>
    <property type="match status" value="1"/>
</dbReference>
<dbReference type="Gene3D" id="4.10.1250.10">
    <property type="entry name" value="Aminomethyltransferase fragment"/>
    <property type="match status" value="1"/>
</dbReference>
<dbReference type="Gene3D" id="3.30.1360.120">
    <property type="entry name" value="Probable tRNA modification gtpase trme, domain 1"/>
    <property type="match status" value="1"/>
</dbReference>
<dbReference type="HAMAP" id="MF_00259">
    <property type="entry name" value="GcvT"/>
    <property type="match status" value="1"/>
</dbReference>
<dbReference type="InterPro" id="IPR006223">
    <property type="entry name" value="GCS_T"/>
</dbReference>
<dbReference type="InterPro" id="IPR022903">
    <property type="entry name" value="GCS_T_bac"/>
</dbReference>
<dbReference type="InterPro" id="IPR013977">
    <property type="entry name" value="GCST_C"/>
</dbReference>
<dbReference type="InterPro" id="IPR006222">
    <property type="entry name" value="GCV_T_N"/>
</dbReference>
<dbReference type="InterPro" id="IPR028896">
    <property type="entry name" value="GcvT/YgfZ/DmdA"/>
</dbReference>
<dbReference type="InterPro" id="IPR029043">
    <property type="entry name" value="GcvT/YgfZ_C"/>
</dbReference>
<dbReference type="InterPro" id="IPR027266">
    <property type="entry name" value="TrmE/GcvT_dom1"/>
</dbReference>
<dbReference type="NCBIfam" id="TIGR00528">
    <property type="entry name" value="gcvT"/>
    <property type="match status" value="1"/>
</dbReference>
<dbReference type="NCBIfam" id="NF001567">
    <property type="entry name" value="PRK00389.1"/>
    <property type="match status" value="1"/>
</dbReference>
<dbReference type="PANTHER" id="PTHR43757">
    <property type="entry name" value="AMINOMETHYLTRANSFERASE"/>
    <property type="match status" value="1"/>
</dbReference>
<dbReference type="PANTHER" id="PTHR43757:SF2">
    <property type="entry name" value="AMINOMETHYLTRANSFERASE, MITOCHONDRIAL"/>
    <property type="match status" value="1"/>
</dbReference>
<dbReference type="Pfam" id="PF01571">
    <property type="entry name" value="GCV_T"/>
    <property type="match status" value="1"/>
</dbReference>
<dbReference type="Pfam" id="PF08669">
    <property type="entry name" value="GCV_T_C"/>
    <property type="match status" value="1"/>
</dbReference>
<dbReference type="PIRSF" id="PIRSF006487">
    <property type="entry name" value="GcvT"/>
    <property type="match status" value="1"/>
</dbReference>
<dbReference type="SUPFAM" id="SSF101790">
    <property type="entry name" value="Aminomethyltransferase beta-barrel domain"/>
    <property type="match status" value="1"/>
</dbReference>
<dbReference type="SUPFAM" id="SSF103025">
    <property type="entry name" value="Folate-binding domain"/>
    <property type="match status" value="1"/>
</dbReference>
<protein>
    <recommendedName>
        <fullName evidence="1">Aminomethyltransferase</fullName>
        <ecNumber evidence="1">2.1.2.10</ecNumber>
    </recommendedName>
    <alternativeName>
        <fullName evidence="1">Glycine cleavage system T protein</fullName>
    </alternativeName>
</protein>
<proteinExistence type="inferred from homology"/>
<reference key="1">
    <citation type="submission" date="2008-04" db="EMBL/GenBank/DDBJ databases">
        <title>Complete sequence of chromosome 1 of Burkholderia ambifaria MC40-6.</title>
        <authorList>
            <person name="Copeland A."/>
            <person name="Lucas S."/>
            <person name="Lapidus A."/>
            <person name="Glavina del Rio T."/>
            <person name="Dalin E."/>
            <person name="Tice H."/>
            <person name="Pitluck S."/>
            <person name="Chain P."/>
            <person name="Malfatti S."/>
            <person name="Shin M."/>
            <person name="Vergez L."/>
            <person name="Lang D."/>
            <person name="Schmutz J."/>
            <person name="Larimer F."/>
            <person name="Land M."/>
            <person name="Hauser L."/>
            <person name="Kyrpides N."/>
            <person name="Lykidis A."/>
            <person name="Ramette A."/>
            <person name="Konstantinidis K."/>
            <person name="Tiedje J."/>
            <person name="Richardson P."/>
        </authorList>
    </citation>
    <scope>NUCLEOTIDE SEQUENCE [LARGE SCALE GENOMIC DNA]</scope>
    <source>
        <strain>MC40-6</strain>
    </source>
</reference>
<sequence>MTALNHTPLNAAHRALNARMVDFGGWDMPVNYGSQIEEHEAVRTDAGMFDVSHMCVVDFTGSRVRAFFEHAIANNVGKLKTPGKALYSCLLNPQGGVIDDLIVYYFTEDFFRVVVNAGTAEKDIAWFNQLNEQGGYGLTIAPRRDFAIVAVQGPNAREKVWTTVPAARAATSELKPFNAARVAGTPFGELTVARTGYTGEDGFEVIVPAVHVEALWTALQQNGVRPCGLGARDTLRLEAGMNLYGQDMDETVSPLDAGLAWTVDLSAPRDFVGRDALERDGTRAAFVGLILQKENGKAGGVLRAHQKVVTPHGEGEITSGTFSPSMQESIAFARVPAAVHVGDTIHVQIRDKQLPARVVKLPFVRNGKVLAA</sequence>
<comment type="function">
    <text evidence="1">The glycine cleavage system catalyzes the degradation of glycine.</text>
</comment>
<comment type="catalytic activity">
    <reaction evidence="1">
        <text>N(6)-[(R)-S(8)-aminomethyldihydrolipoyl]-L-lysyl-[protein] + (6S)-5,6,7,8-tetrahydrofolate = N(6)-[(R)-dihydrolipoyl]-L-lysyl-[protein] + (6R)-5,10-methylene-5,6,7,8-tetrahydrofolate + NH4(+)</text>
        <dbReference type="Rhea" id="RHEA:16945"/>
        <dbReference type="Rhea" id="RHEA-COMP:10475"/>
        <dbReference type="Rhea" id="RHEA-COMP:10492"/>
        <dbReference type="ChEBI" id="CHEBI:15636"/>
        <dbReference type="ChEBI" id="CHEBI:28938"/>
        <dbReference type="ChEBI" id="CHEBI:57453"/>
        <dbReference type="ChEBI" id="CHEBI:83100"/>
        <dbReference type="ChEBI" id="CHEBI:83143"/>
        <dbReference type="EC" id="2.1.2.10"/>
    </reaction>
</comment>
<comment type="subunit">
    <text evidence="1">The glycine cleavage system is composed of four proteins: P, T, L and H.</text>
</comment>
<comment type="similarity">
    <text evidence="1">Belongs to the GcvT family.</text>
</comment>
<name>GCST_BURA4</name>
<keyword id="KW-0032">Aminotransferase</keyword>
<keyword id="KW-0808">Transferase</keyword>
<evidence type="ECO:0000255" key="1">
    <source>
        <dbReference type="HAMAP-Rule" id="MF_00259"/>
    </source>
</evidence>
<organism>
    <name type="scientific">Burkholderia ambifaria (strain MC40-6)</name>
    <dbReference type="NCBI Taxonomy" id="398577"/>
    <lineage>
        <taxon>Bacteria</taxon>
        <taxon>Pseudomonadati</taxon>
        <taxon>Pseudomonadota</taxon>
        <taxon>Betaproteobacteria</taxon>
        <taxon>Burkholderiales</taxon>
        <taxon>Burkholderiaceae</taxon>
        <taxon>Burkholderia</taxon>
        <taxon>Burkholderia cepacia complex</taxon>
    </lineage>
</organism>
<gene>
    <name evidence="1" type="primary">gcvT</name>
    <name type="ordered locus">BamMC406_0145</name>
</gene>